<name>PYRB_SYNAS</name>
<protein>
    <recommendedName>
        <fullName evidence="1">Aspartate carbamoyltransferase catalytic subunit</fullName>
        <ecNumber evidence="1">2.1.3.2</ecNumber>
    </recommendedName>
    <alternativeName>
        <fullName evidence="1">Aspartate transcarbamylase</fullName>
        <shortName evidence="1">ATCase</shortName>
    </alternativeName>
</protein>
<accession>Q2LVI4</accession>
<reference key="1">
    <citation type="journal article" date="2007" name="Proc. Natl. Acad. Sci. U.S.A.">
        <title>The genome of Syntrophus aciditrophicus: life at the thermodynamic limit of microbial growth.</title>
        <authorList>
            <person name="McInerney M.J."/>
            <person name="Rohlin L."/>
            <person name="Mouttaki H."/>
            <person name="Kim U."/>
            <person name="Krupp R.S."/>
            <person name="Rios-Hernandez L."/>
            <person name="Sieber J."/>
            <person name="Struchtemeyer C.G."/>
            <person name="Bhattacharyya A."/>
            <person name="Campbell J.W."/>
            <person name="Gunsalus R.P."/>
        </authorList>
    </citation>
    <scope>NUCLEOTIDE SEQUENCE [LARGE SCALE GENOMIC DNA]</scope>
    <source>
        <strain>SB</strain>
    </source>
</reference>
<organism>
    <name type="scientific">Syntrophus aciditrophicus (strain SB)</name>
    <dbReference type="NCBI Taxonomy" id="56780"/>
    <lineage>
        <taxon>Bacteria</taxon>
        <taxon>Pseudomonadati</taxon>
        <taxon>Thermodesulfobacteriota</taxon>
        <taxon>Syntrophia</taxon>
        <taxon>Syntrophales</taxon>
        <taxon>Syntrophaceae</taxon>
        <taxon>Syntrophus</taxon>
    </lineage>
</organism>
<keyword id="KW-0665">Pyrimidine biosynthesis</keyword>
<keyword id="KW-1185">Reference proteome</keyword>
<keyword id="KW-0808">Transferase</keyword>
<proteinExistence type="inferred from homology"/>
<comment type="function">
    <text evidence="1">Catalyzes the condensation of carbamoyl phosphate and aspartate to form carbamoyl aspartate and inorganic phosphate, the committed step in the de novo pyrimidine nucleotide biosynthesis pathway.</text>
</comment>
<comment type="catalytic activity">
    <reaction evidence="1">
        <text>carbamoyl phosphate + L-aspartate = N-carbamoyl-L-aspartate + phosphate + H(+)</text>
        <dbReference type="Rhea" id="RHEA:20013"/>
        <dbReference type="ChEBI" id="CHEBI:15378"/>
        <dbReference type="ChEBI" id="CHEBI:29991"/>
        <dbReference type="ChEBI" id="CHEBI:32814"/>
        <dbReference type="ChEBI" id="CHEBI:43474"/>
        <dbReference type="ChEBI" id="CHEBI:58228"/>
        <dbReference type="EC" id="2.1.3.2"/>
    </reaction>
</comment>
<comment type="pathway">
    <text evidence="1">Pyrimidine metabolism; UMP biosynthesis via de novo pathway; (S)-dihydroorotate from bicarbonate: step 2/3.</text>
</comment>
<comment type="subunit">
    <text evidence="1">Heterododecamer (2C3:3R2) of six catalytic PyrB chains organized as two trimers (C3), and six regulatory PyrI chains organized as three dimers (R2).</text>
</comment>
<comment type="similarity">
    <text evidence="1">Belongs to the aspartate/ornithine carbamoyltransferase superfamily. ATCase family.</text>
</comment>
<comment type="sequence caution" evidence="2">
    <conflict type="erroneous initiation">
        <sequence resource="EMBL-CDS" id="ABC78090"/>
    </conflict>
</comment>
<sequence>MKWERKDILGMKDLSVEEIHMILDTAESFLEVSARDIKKVPTLRGKTIINFFVEASTRTRTSFEIAGKRLSADTINISASASSLVKGETLADTARNLEAMNPDVIVIRHSCAGAPHMLAGLVRQSIINAGDGAHEHPSQALLDMMTIRNRKGGLSGLNVTIVGDIAHSRVARSNIYGLNKMGVCVTVAGPATMIPRDIQQLGVKVCFSLEEAILDADVIMMLRIQTEREQQNIFPSLREYSTFYCLNRENIKKAKKDVLVMHPGPVNRGVEISPEIADGVHSVILEQVTNGVAVRMALLYLLTGASS</sequence>
<feature type="chain" id="PRO_0000321175" description="Aspartate carbamoyltransferase catalytic subunit">
    <location>
        <begin position="1"/>
        <end position="307"/>
    </location>
</feature>
<feature type="binding site" evidence="1">
    <location>
        <position position="58"/>
    </location>
    <ligand>
        <name>carbamoyl phosphate</name>
        <dbReference type="ChEBI" id="CHEBI:58228"/>
    </ligand>
</feature>
<feature type="binding site" evidence="1">
    <location>
        <position position="59"/>
    </location>
    <ligand>
        <name>carbamoyl phosphate</name>
        <dbReference type="ChEBI" id="CHEBI:58228"/>
    </ligand>
</feature>
<feature type="binding site" evidence="1">
    <location>
        <position position="86"/>
    </location>
    <ligand>
        <name>L-aspartate</name>
        <dbReference type="ChEBI" id="CHEBI:29991"/>
    </ligand>
</feature>
<feature type="binding site" evidence="1">
    <location>
        <position position="108"/>
    </location>
    <ligand>
        <name>carbamoyl phosphate</name>
        <dbReference type="ChEBI" id="CHEBI:58228"/>
    </ligand>
</feature>
<feature type="binding site" evidence="1">
    <location>
        <position position="136"/>
    </location>
    <ligand>
        <name>carbamoyl phosphate</name>
        <dbReference type="ChEBI" id="CHEBI:58228"/>
    </ligand>
</feature>
<feature type="binding site" evidence="1">
    <location>
        <position position="139"/>
    </location>
    <ligand>
        <name>carbamoyl phosphate</name>
        <dbReference type="ChEBI" id="CHEBI:58228"/>
    </ligand>
</feature>
<feature type="binding site" evidence="1">
    <location>
        <position position="169"/>
    </location>
    <ligand>
        <name>L-aspartate</name>
        <dbReference type="ChEBI" id="CHEBI:29991"/>
    </ligand>
</feature>
<feature type="binding site" evidence="1">
    <location>
        <position position="223"/>
    </location>
    <ligand>
        <name>L-aspartate</name>
        <dbReference type="ChEBI" id="CHEBI:29991"/>
    </ligand>
</feature>
<feature type="binding site" evidence="1">
    <location>
        <position position="264"/>
    </location>
    <ligand>
        <name>carbamoyl phosphate</name>
        <dbReference type="ChEBI" id="CHEBI:58228"/>
    </ligand>
</feature>
<feature type="binding site" evidence="1">
    <location>
        <position position="265"/>
    </location>
    <ligand>
        <name>carbamoyl phosphate</name>
        <dbReference type="ChEBI" id="CHEBI:58228"/>
    </ligand>
</feature>
<evidence type="ECO:0000255" key="1">
    <source>
        <dbReference type="HAMAP-Rule" id="MF_00001"/>
    </source>
</evidence>
<evidence type="ECO:0000305" key="2"/>
<gene>
    <name evidence="1" type="primary">pyrB</name>
    <name type="ordered locus">SYNAS_22110</name>
    <name type="ORF">SYN_01532</name>
</gene>
<dbReference type="EC" id="2.1.3.2" evidence="1"/>
<dbReference type="EMBL" id="CP000252">
    <property type="protein sequence ID" value="ABC78090.1"/>
    <property type="status" value="ALT_INIT"/>
    <property type="molecule type" value="Genomic_DNA"/>
</dbReference>
<dbReference type="RefSeq" id="WP_041585001.1">
    <property type="nucleotide sequence ID" value="NC_007759.1"/>
</dbReference>
<dbReference type="SMR" id="Q2LVI4"/>
<dbReference type="FunCoup" id="Q2LVI4">
    <property type="interactions" value="508"/>
</dbReference>
<dbReference type="STRING" id="56780.SYN_01532"/>
<dbReference type="KEGG" id="sat:SYN_01532"/>
<dbReference type="eggNOG" id="COG0540">
    <property type="taxonomic scope" value="Bacteria"/>
</dbReference>
<dbReference type="HOGENOM" id="CLU_043846_2_0_7"/>
<dbReference type="InParanoid" id="Q2LVI4"/>
<dbReference type="OrthoDB" id="9774690at2"/>
<dbReference type="UniPathway" id="UPA00070">
    <property type="reaction ID" value="UER00116"/>
</dbReference>
<dbReference type="Proteomes" id="UP000001933">
    <property type="component" value="Chromosome"/>
</dbReference>
<dbReference type="GO" id="GO:0005829">
    <property type="term" value="C:cytosol"/>
    <property type="evidence" value="ECO:0007669"/>
    <property type="project" value="TreeGrafter"/>
</dbReference>
<dbReference type="GO" id="GO:0016597">
    <property type="term" value="F:amino acid binding"/>
    <property type="evidence" value="ECO:0007669"/>
    <property type="project" value="InterPro"/>
</dbReference>
<dbReference type="GO" id="GO:0004070">
    <property type="term" value="F:aspartate carbamoyltransferase activity"/>
    <property type="evidence" value="ECO:0007669"/>
    <property type="project" value="UniProtKB-UniRule"/>
</dbReference>
<dbReference type="GO" id="GO:0006207">
    <property type="term" value="P:'de novo' pyrimidine nucleobase biosynthetic process"/>
    <property type="evidence" value="ECO:0007669"/>
    <property type="project" value="InterPro"/>
</dbReference>
<dbReference type="GO" id="GO:0044205">
    <property type="term" value="P:'de novo' UMP biosynthetic process"/>
    <property type="evidence" value="ECO:0007669"/>
    <property type="project" value="UniProtKB-UniRule"/>
</dbReference>
<dbReference type="GO" id="GO:0006520">
    <property type="term" value="P:amino acid metabolic process"/>
    <property type="evidence" value="ECO:0007669"/>
    <property type="project" value="InterPro"/>
</dbReference>
<dbReference type="FunFam" id="3.40.50.1370:FF:000007">
    <property type="entry name" value="Aspartate carbamoyltransferase"/>
    <property type="match status" value="1"/>
</dbReference>
<dbReference type="Gene3D" id="3.40.50.1370">
    <property type="entry name" value="Aspartate/ornithine carbamoyltransferase"/>
    <property type="match status" value="2"/>
</dbReference>
<dbReference type="HAMAP" id="MF_00001">
    <property type="entry name" value="Asp_carb_tr"/>
    <property type="match status" value="1"/>
</dbReference>
<dbReference type="InterPro" id="IPR006132">
    <property type="entry name" value="Asp/Orn_carbamoyltranf_P-bd"/>
</dbReference>
<dbReference type="InterPro" id="IPR006130">
    <property type="entry name" value="Asp/Orn_carbamoylTrfase"/>
</dbReference>
<dbReference type="InterPro" id="IPR036901">
    <property type="entry name" value="Asp/Orn_carbamoylTrfase_sf"/>
</dbReference>
<dbReference type="InterPro" id="IPR002082">
    <property type="entry name" value="Asp_carbamoyltransf"/>
</dbReference>
<dbReference type="InterPro" id="IPR006131">
    <property type="entry name" value="Asp_carbamoyltransf_Asp/Orn-bd"/>
</dbReference>
<dbReference type="NCBIfam" id="TIGR00670">
    <property type="entry name" value="asp_carb_tr"/>
    <property type="match status" value="1"/>
</dbReference>
<dbReference type="NCBIfam" id="NF002032">
    <property type="entry name" value="PRK00856.1"/>
    <property type="match status" value="1"/>
</dbReference>
<dbReference type="PANTHER" id="PTHR45753:SF6">
    <property type="entry name" value="ASPARTATE CARBAMOYLTRANSFERASE"/>
    <property type="match status" value="1"/>
</dbReference>
<dbReference type="PANTHER" id="PTHR45753">
    <property type="entry name" value="ORNITHINE CARBAMOYLTRANSFERASE, MITOCHONDRIAL"/>
    <property type="match status" value="1"/>
</dbReference>
<dbReference type="Pfam" id="PF00185">
    <property type="entry name" value="OTCace"/>
    <property type="match status" value="1"/>
</dbReference>
<dbReference type="Pfam" id="PF02729">
    <property type="entry name" value="OTCace_N"/>
    <property type="match status" value="1"/>
</dbReference>
<dbReference type="PRINTS" id="PR00100">
    <property type="entry name" value="AOTCASE"/>
</dbReference>
<dbReference type="PRINTS" id="PR00101">
    <property type="entry name" value="ATCASE"/>
</dbReference>
<dbReference type="SUPFAM" id="SSF53671">
    <property type="entry name" value="Aspartate/ornithine carbamoyltransferase"/>
    <property type="match status" value="1"/>
</dbReference>
<dbReference type="PROSITE" id="PS00097">
    <property type="entry name" value="CARBAMOYLTRANSFERASE"/>
    <property type="match status" value="1"/>
</dbReference>